<feature type="signal peptide" evidence="2">
    <location>
        <begin position="1"/>
        <end position="23"/>
    </location>
</feature>
<feature type="chain" id="PRO_0000036047" description="UDP-glucuronosyltransferase 2B30">
    <location>
        <begin position="24"/>
        <end position="528"/>
    </location>
</feature>
<feature type="transmembrane region" description="Helical" evidence="2">
    <location>
        <begin position="493"/>
        <end position="513"/>
    </location>
</feature>
<feature type="modified residue" description="N6-succinyllysine" evidence="1">
    <location>
        <position position="135"/>
    </location>
</feature>
<feature type="glycosylation site" description="N-linked (GlcNAc...) asparagine" evidence="2">
    <location>
        <position position="315"/>
    </location>
</feature>
<organism>
    <name type="scientific">Macaca fascicularis</name>
    <name type="common">Crab-eating macaque</name>
    <name type="synonym">Cynomolgus monkey</name>
    <dbReference type="NCBI Taxonomy" id="9541"/>
    <lineage>
        <taxon>Eukaryota</taxon>
        <taxon>Metazoa</taxon>
        <taxon>Chordata</taxon>
        <taxon>Craniata</taxon>
        <taxon>Vertebrata</taxon>
        <taxon>Euteleostomi</taxon>
        <taxon>Mammalia</taxon>
        <taxon>Eutheria</taxon>
        <taxon>Euarchontoglires</taxon>
        <taxon>Primates</taxon>
        <taxon>Haplorrhini</taxon>
        <taxon>Catarrhini</taxon>
        <taxon>Cercopithecidae</taxon>
        <taxon>Cercopithecinae</taxon>
        <taxon>Macaca</taxon>
    </lineage>
</organism>
<proteinExistence type="evidence at protein level"/>
<protein>
    <recommendedName>
        <fullName>UDP-glucuronosyltransferase 2B30</fullName>
        <shortName>UDPGT 2B30</shortName>
        <ecNumber>2.4.1.17</ecNumber>
    </recommendedName>
</protein>
<name>UDB30_MACFA</name>
<dbReference type="EC" id="2.4.1.17"/>
<dbReference type="EMBL" id="AF401657">
    <property type="protein sequence ID" value="AAL60145.1"/>
    <property type="molecule type" value="mRNA"/>
</dbReference>
<dbReference type="RefSeq" id="NP_001306409.1">
    <property type="nucleotide sequence ID" value="NM_001319480.1"/>
</dbReference>
<dbReference type="SMR" id="Q8WN97"/>
<dbReference type="STRING" id="9541.ENSMFAP00000004345"/>
<dbReference type="CAZy" id="GT1">
    <property type="family name" value="Glycosyltransferase Family 1"/>
</dbReference>
<dbReference type="GlyCosmos" id="Q8WN97">
    <property type="glycosylation" value="1 site, No reported glycans"/>
</dbReference>
<dbReference type="SABIO-RK" id="Q8WN97"/>
<dbReference type="Proteomes" id="UP000233100">
    <property type="component" value="Unplaced"/>
</dbReference>
<dbReference type="GO" id="GO:0005789">
    <property type="term" value="C:endoplasmic reticulum membrane"/>
    <property type="evidence" value="ECO:0007669"/>
    <property type="project" value="UniProtKB-SubCell"/>
</dbReference>
<dbReference type="GO" id="GO:0015020">
    <property type="term" value="F:glucuronosyltransferase activity"/>
    <property type="evidence" value="ECO:0007669"/>
    <property type="project" value="UniProtKB-EC"/>
</dbReference>
<dbReference type="CDD" id="cd03784">
    <property type="entry name" value="GT1_Gtf-like"/>
    <property type="match status" value="1"/>
</dbReference>
<dbReference type="FunFam" id="3.40.50.2000:FF:000001">
    <property type="entry name" value="UDP-glucuronosyltransferase"/>
    <property type="match status" value="1"/>
</dbReference>
<dbReference type="FunFam" id="3.40.50.2000:FF:000081">
    <property type="entry name" value="UDP-glucuronosyltransferase 2A2"/>
    <property type="match status" value="1"/>
</dbReference>
<dbReference type="Gene3D" id="3.40.50.2000">
    <property type="entry name" value="Glycogen Phosphorylase B"/>
    <property type="match status" value="2"/>
</dbReference>
<dbReference type="InterPro" id="IPR050271">
    <property type="entry name" value="UDP-glycosyltransferase"/>
</dbReference>
<dbReference type="InterPro" id="IPR002213">
    <property type="entry name" value="UDP_glucos_trans"/>
</dbReference>
<dbReference type="InterPro" id="IPR035595">
    <property type="entry name" value="UDP_glycos_trans_CS"/>
</dbReference>
<dbReference type="PANTHER" id="PTHR48043">
    <property type="entry name" value="EG:EG0003.4 PROTEIN-RELATED"/>
    <property type="match status" value="1"/>
</dbReference>
<dbReference type="PANTHER" id="PTHR48043:SF12">
    <property type="entry name" value="UDP-GLUCURONOSYLTRANSFERASE 2B4"/>
    <property type="match status" value="1"/>
</dbReference>
<dbReference type="Pfam" id="PF00201">
    <property type="entry name" value="UDPGT"/>
    <property type="match status" value="1"/>
</dbReference>
<dbReference type="SUPFAM" id="SSF53756">
    <property type="entry name" value="UDP-Glycosyltransferase/glycogen phosphorylase"/>
    <property type="match status" value="1"/>
</dbReference>
<dbReference type="PROSITE" id="PS00375">
    <property type="entry name" value="UDPGT"/>
    <property type="match status" value="1"/>
</dbReference>
<evidence type="ECO:0000250" key="1">
    <source>
        <dbReference type="UniProtKB" id="Q8BWQ1"/>
    </source>
</evidence>
<evidence type="ECO:0000255" key="2"/>
<evidence type="ECO:0000269" key="3">
    <source>
    </source>
</evidence>
<evidence type="ECO:0000305" key="4"/>
<accession>Q8WN97</accession>
<gene>
    <name type="primary">UGT2B30</name>
</gene>
<sequence length="528" mass="60366">MSMKWTSALLLIQLSCYLSSGNCGKVLVWPTEFSHWMNIKTILDELVQRGHEVTVLAYSPSILPGPNNPSALKFEICPTSLTETEFEDSVTQLVKRWSDIPKDTFWPHFLQVQEMMWTYGDMIRKFCKDVVSNKKLMKKLQESRFDVVLADAISPCGELLAELLKIPFVYSLRFSPGYAIEKHGGGFLFPPSYVPVVMSEFSDQMTFMERVKNMIYMVYFDFWFQAWDTKKWDQFYSEVLGRPTTLFETMAKAEIWLIRNYWDFQFPHPLLPHVELVGGLHCKPAKPLPKEMEGFVQSSGDNGVVVFSLGSMVSNMSEERANVIASALAKIPQKVLWRFDGNKPDTLGLNTQLYKWLPQNDLLGHPKTRAFITHGGANAIYEAIYHGIPMVGVPLFADQLDNIAHMKAKGARVSLDFNTMSSTDLLHALKTVINDPFYKENAMKLSSIHHDQPVKPLDRAVFWIEFVMRHKGAKHLRVAAYDLTWFQYHSLDVIGFLLACVATVIFIITKCLFCVLKFVRTGKKGKRD</sequence>
<reference key="1">
    <citation type="journal article" date="2002" name="Biochem. J.">
        <title>Isolation and characterization of the monkey UGT2B30 gene that encodes a uridine diphosphate-glucuronosyltransferase enzyme active on mineralocorticoid, glucocorticoid, androgen and oestrogen hormones.</title>
        <authorList>
            <person name="Girard C."/>
            <person name="Barbier O."/>
            <person name="Turgeon D."/>
            <person name="Belanger A."/>
        </authorList>
    </citation>
    <scope>NUCLEOTIDE SEQUENCE [MRNA]</scope>
    <scope>CHARACTERIZATION</scope>
    <scope>TISSUE SPECIFICITY</scope>
    <source>
        <tissue>Prostate</tissue>
    </source>
</reference>
<comment type="function">
    <text>UDPGTs are of major importance in the conjugation and subsequent elimination of potentially toxic xenobiotics and endogenous compounds. This isozyme has glucuronidating capacity on testosterone, dihydrotestosterone, 5-alpha-androstane-3-alpha,17-beta-diol, androsterone, oestradiol, tetrahydroaldosterone and tetrahydrocortisone. This enzyme is essential to inactivation of several steroids.</text>
</comment>
<comment type="catalytic activity">
    <reaction>
        <text>glucuronate acceptor + UDP-alpha-D-glucuronate = acceptor beta-D-glucuronoside + UDP + H(+)</text>
        <dbReference type="Rhea" id="RHEA:21032"/>
        <dbReference type="ChEBI" id="CHEBI:15378"/>
        <dbReference type="ChEBI" id="CHEBI:58052"/>
        <dbReference type="ChEBI" id="CHEBI:58223"/>
        <dbReference type="ChEBI" id="CHEBI:132367"/>
        <dbReference type="ChEBI" id="CHEBI:132368"/>
        <dbReference type="EC" id="2.4.1.17"/>
    </reaction>
</comment>
<comment type="subcellular location">
    <subcellularLocation>
        <location evidence="4">Microsome membrane</location>
        <topology evidence="4">Single-pass membrane protein</topology>
    </subcellularLocation>
    <subcellularLocation>
        <location evidence="4">Endoplasmic reticulum membrane</location>
        <topology evidence="4">Single-pass membrane protein</topology>
    </subcellularLocation>
</comment>
<comment type="tissue specificity">
    <text evidence="3">Expressed in several tissues, including prostate, testis, mammary gland, kidney, adrenals and intestine.</text>
</comment>
<comment type="similarity">
    <text evidence="4">Belongs to the UDP-glycosyltransferase family.</text>
</comment>
<keyword id="KW-0256">Endoplasmic reticulum</keyword>
<keyword id="KW-0325">Glycoprotein</keyword>
<keyword id="KW-0328">Glycosyltransferase</keyword>
<keyword id="KW-0472">Membrane</keyword>
<keyword id="KW-0492">Microsome</keyword>
<keyword id="KW-1185">Reference proteome</keyword>
<keyword id="KW-0732">Signal</keyword>
<keyword id="KW-0808">Transferase</keyword>
<keyword id="KW-0812">Transmembrane</keyword>
<keyword id="KW-1133">Transmembrane helix</keyword>